<geneLocation type="chloroplast"/>
<reference key="1">
    <citation type="journal article" date="2002" name="Am. J. Bot.">
        <title>Monophyly of the Convolvulaceae and circumscription of their major lineages based on DNA sequences of multiple chloroplast loci.</title>
        <authorList>
            <person name="Stefanovic S."/>
            <person name="Krueger L."/>
            <person name="Olmstead R.G."/>
        </authorList>
        <dbReference type="AGRICOLA" id="IND23320510"/>
    </citation>
    <scope>NUCLEOTIDE SEQUENCE [GENOMIC DNA]</scope>
</reference>
<gene>
    <name evidence="1" type="primary">psbL</name>
</gene>
<name>PSBL_CONAR</name>
<keyword id="KW-0150">Chloroplast</keyword>
<keyword id="KW-0472">Membrane</keyword>
<keyword id="KW-0602">Photosynthesis</keyword>
<keyword id="KW-0604">Photosystem II</keyword>
<keyword id="KW-0934">Plastid</keyword>
<keyword id="KW-0674">Reaction center</keyword>
<keyword id="KW-0793">Thylakoid</keyword>
<keyword id="KW-0812">Transmembrane</keyword>
<keyword id="KW-1133">Transmembrane helix</keyword>
<protein>
    <recommendedName>
        <fullName evidence="1">Photosystem II reaction center protein L</fullName>
        <shortName evidence="1">PSII-L</shortName>
    </recommendedName>
</protein>
<sequence length="38" mass="4497">MTQSNPNEQNVELNRTSLYWGLLLIFVLAVLFSNYFFN</sequence>
<proteinExistence type="inferred from homology"/>
<comment type="function">
    <text evidence="1">One of the components of the core complex of photosystem II (PSII). PSII is a light-driven water:plastoquinone oxidoreductase that uses light energy to abstract electrons from H(2)O, generating O(2) and a proton gradient subsequently used for ATP formation. It consists of a core antenna complex that captures photons, and an electron transfer chain that converts photonic excitation into a charge separation. This subunit is found at the monomer-monomer interface and is required for correct PSII assembly and/or dimerization.</text>
</comment>
<comment type="subunit">
    <text evidence="1">PSII is composed of 1 copy each of membrane proteins PsbA, PsbB, PsbC, PsbD, PsbE, PsbF, PsbH, PsbI, PsbJ, PsbK, PsbL, PsbM, PsbT, PsbX, PsbY, PsbZ, Psb30/Ycf12, at least 3 peripheral proteins of the oxygen-evolving complex and a large number of cofactors. It forms dimeric complexes.</text>
</comment>
<comment type="subcellular location">
    <subcellularLocation>
        <location evidence="1">Plastid</location>
        <location evidence="1">Chloroplast thylakoid membrane</location>
        <topology evidence="1">Single-pass membrane protein</topology>
    </subcellularLocation>
</comment>
<comment type="similarity">
    <text evidence="1">Belongs to the PsbL family.</text>
</comment>
<organism>
    <name type="scientific">Convolvulus arvensis</name>
    <name type="common">Field bindweed</name>
    <name type="synonym">Strophocaulos arvensis</name>
    <dbReference type="NCBI Taxonomy" id="4123"/>
    <lineage>
        <taxon>Eukaryota</taxon>
        <taxon>Viridiplantae</taxon>
        <taxon>Streptophyta</taxon>
        <taxon>Embryophyta</taxon>
        <taxon>Tracheophyta</taxon>
        <taxon>Spermatophyta</taxon>
        <taxon>Magnoliopsida</taxon>
        <taxon>eudicotyledons</taxon>
        <taxon>Gunneridae</taxon>
        <taxon>Pentapetalae</taxon>
        <taxon>asterids</taxon>
        <taxon>lamiids</taxon>
        <taxon>Solanales</taxon>
        <taxon>Convolvulaceae</taxon>
        <taxon>Convolvuleae</taxon>
        <taxon>Convolvulus</taxon>
    </lineage>
</organism>
<feature type="chain" id="PRO_0000219700" description="Photosystem II reaction center protein L">
    <location>
        <begin position="1"/>
        <end position="38"/>
    </location>
</feature>
<feature type="transmembrane region" description="Helical" evidence="1">
    <location>
        <begin position="17"/>
        <end position="37"/>
    </location>
</feature>
<accession>Q7H8E4</accession>
<dbReference type="EMBL" id="AY100888">
    <property type="protein sequence ID" value="AAM55674.1"/>
    <property type="molecule type" value="Genomic_DNA"/>
</dbReference>
<dbReference type="SMR" id="Q7H8E4"/>
<dbReference type="GO" id="GO:0009535">
    <property type="term" value="C:chloroplast thylakoid membrane"/>
    <property type="evidence" value="ECO:0007669"/>
    <property type="project" value="UniProtKB-SubCell"/>
</dbReference>
<dbReference type="GO" id="GO:0009539">
    <property type="term" value="C:photosystem II reaction center"/>
    <property type="evidence" value="ECO:0007669"/>
    <property type="project" value="InterPro"/>
</dbReference>
<dbReference type="GO" id="GO:0015979">
    <property type="term" value="P:photosynthesis"/>
    <property type="evidence" value="ECO:0007669"/>
    <property type="project" value="UniProtKB-UniRule"/>
</dbReference>
<dbReference type="HAMAP" id="MF_01317">
    <property type="entry name" value="PSII_PsbL"/>
    <property type="match status" value="1"/>
</dbReference>
<dbReference type="InterPro" id="IPR003372">
    <property type="entry name" value="PSII_PsbL"/>
</dbReference>
<dbReference type="InterPro" id="IPR037266">
    <property type="entry name" value="PSII_PsbL_sf"/>
</dbReference>
<dbReference type="NCBIfam" id="NF001972">
    <property type="entry name" value="PRK00753.1"/>
    <property type="match status" value="1"/>
</dbReference>
<dbReference type="Pfam" id="PF02419">
    <property type="entry name" value="PsbL"/>
    <property type="match status" value="1"/>
</dbReference>
<dbReference type="SUPFAM" id="SSF161017">
    <property type="entry name" value="Photosystem II reaction center protein L, PsbL"/>
    <property type="match status" value="1"/>
</dbReference>
<evidence type="ECO:0000255" key="1">
    <source>
        <dbReference type="HAMAP-Rule" id="MF_01317"/>
    </source>
</evidence>